<sequence length="277" mass="31624">MKKQRAFLKWAGGKYSLVEDIQRHLPEARELVEPFVGAGSVFLNTDFERYLLADINPDLINFYNLLKTEPQAYIHEAKRWFVPENNRKEVYLDIRKQFNQSDDAMFRSLAFLYMNRFGFNGLCRYNKKGGFNVPFGSYKKPYFPEQELEFFAEKAQRATFICASYGETFARAQSDSVIYCDPPYAPLSTTANFTSYAGNGFTLDDQAALADIAEKTAKERGISVLISNHDTTHTRRLYRGAQLNVVKANRTISRNGAGRNKVDELLALFTPHLSSQA</sequence>
<proteinExistence type="inferred from homology"/>
<dbReference type="EC" id="2.1.1.72"/>
<dbReference type="EMBL" id="X67820">
    <property type="protein sequence ID" value="CAA48031.1"/>
    <property type="status" value="ALT_FRAME"/>
    <property type="molecule type" value="Genomic_DNA"/>
</dbReference>
<dbReference type="EMBL" id="AE003852">
    <property type="protein sequence ID" value="AAF95767.1"/>
    <property type="molecule type" value="Genomic_DNA"/>
</dbReference>
<dbReference type="PIR" id="H82052">
    <property type="entry name" value="H82052"/>
</dbReference>
<dbReference type="PIR" id="S29558">
    <property type="entry name" value="S29558"/>
</dbReference>
<dbReference type="RefSeq" id="NP_232254.1">
    <property type="nucleotide sequence ID" value="NC_002505.1"/>
</dbReference>
<dbReference type="RefSeq" id="WP_000744680.1">
    <property type="nucleotide sequence ID" value="NZ_LT906614.1"/>
</dbReference>
<dbReference type="SMR" id="P0C6Q8"/>
<dbReference type="STRING" id="243277.VC_2626"/>
<dbReference type="REBASE" id="4762">
    <property type="entry name" value="M.VchADamP"/>
</dbReference>
<dbReference type="DNASU" id="2615643"/>
<dbReference type="EnsemblBacteria" id="AAF95767">
    <property type="protein sequence ID" value="AAF95767"/>
    <property type="gene ID" value="VC_2626"/>
</dbReference>
<dbReference type="KEGG" id="vch:VC_2626"/>
<dbReference type="PATRIC" id="fig|243277.26.peg.2504"/>
<dbReference type="eggNOG" id="COG0338">
    <property type="taxonomic scope" value="Bacteria"/>
</dbReference>
<dbReference type="HOGENOM" id="CLU_063430_0_1_6"/>
<dbReference type="Proteomes" id="UP000000584">
    <property type="component" value="Chromosome 1"/>
</dbReference>
<dbReference type="GO" id="GO:1904047">
    <property type="term" value="F:S-adenosyl-L-methionine binding"/>
    <property type="evidence" value="ECO:0000318"/>
    <property type="project" value="GO_Central"/>
</dbReference>
<dbReference type="GO" id="GO:0043565">
    <property type="term" value="F:sequence-specific DNA binding"/>
    <property type="evidence" value="ECO:0000318"/>
    <property type="project" value="GO_Central"/>
</dbReference>
<dbReference type="GO" id="GO:0009007">
    <property type="term" value="F:site-specific DNA-methyltransferase (adenine-specific) activity"/>
    <property type="evidence" value="ECO:0000318"/>
    <property type="project" value="GO_Central"/>
</dbReference>
<dbReference type="GO" id="GO:0006260">
    <property type="term" value="P:DNA replication"/>
    <property type="evidence" value="ECO:0007669"/>
    <property type="project" value="UniProtKB-KW"/>
</dbReference>
<dbReference type="GO" id="GO:0009307">
    <property type="term" value="P:DNA restriction-modification system"/>
    <property type="evidence" value="ECO:0007669"/>
    <property type="project" value="InterPro"/>
</dbReference>
<dbReference type="GO" id="GO:0032259">
    <property type="term" value="P:methylation"/>
    <property type="evidence" value="ECO:0007669"/>
    <property type="project" value="UniProtKB-KW"/>
</dbReference>
<dbReference type="GO" id="GO:0006298">
    <property type="term" value="P:mismatch repair"/>
    <property type="evidence" value="ECO:0000318"/>
    <property type="project" value="GO_Central"/>
</dbReference>
<dbReference type="FunFam" id="1.10.1020.10:FF:000001">
    <property type="entry name" value="Site-specific DNA-methyltransferase (adenine-specific)"/>
    <property type="match status" value="1"/>
</dbReference>
<dbReference type="Gene3D" id="1.10.1020.10">
    <property type="entry name" value="Adenine-specific Methyltransferase, Domain 2"/>
    <property type="match status" value="1"/>
</dbReference>
<dbReference type="Gene3D" id="3.40.50.150">
    <property type="entry name" value="Vaccinia Virus protein VP39"/>
    <property type="match status" value="1"/>
</dbReference>
<dbReference type="InterPro" id="IPR023095">
    <property type="entry name" value="Ade_MeTrfase_dom_2"/>
</dbReference>
<dbReference type="InterPro" id="IPR002052">
    <property type="entry name" value="DNA_methylase_N6_adenine_CS"/>
</dbReference>
<dbReference type="InterPro" id="IPR012263">
    <property type="entry name" value="M_m6A_EcoRV"/>
</dbReference>
<dbReference type="InterPro" id="IPR012327">
    <property type="entry name" value="MeTrfase_D12"/>
</dbReference>
<dbReference type="InterPro" id="IPR029063">
    <property type="entry name" value="SAM-dependent_MTases_sf"/>
</dbReference>
<dbReference type="NCBIfam" id="TIGR00571">
    <property type="entry name" value="dam"/>
    <property type="match status" value="1"/>
</dbReference>
<dbReference type="PANTHER" id="PTHR30481">
    <property type="entry name" value="DNA ADENINE METHYLASE"/>
    <property type="match status" value="1"/>
</dbReference>
<dbReference type="PANTHER" id="PTHR30481:SF3">
    <property type="entry name" value="DNA ADENINE METHYLASE"/>
    <property type="match status" value="1"/>
</dbReference>
<dbReference type="Pfam" id="PF02086">
    <property type="entry name" value="MethyltransfD12"/>
    <property type="match status" value="1"/>
</dbReference>
<dbReference type="PIRSF" id="PIRSF000398">
    <property type="entry name" value="M_m6A_EcoRV"/>
    <property type="match status" value="1"/>
</dbReference>
<dbReference type="PRINTS" id="PR00505">
    <property type="entry name" value="D12N6MTFRASE"/>
</dbReference>
<dbReference type="SUPFAM" id="SSF53335">
    <property type="entry name" value="S-adenosyl-L-methionine-dependent methyltransferases"/>
    <property type="match status" value="1"/>
</dbReference>
<dbReference type="PROSITE" id="PS00092">
    <property type="entry name" value="N6_MTASE"/>
    <property type="match status" value="1"/>
</dbReference>
<comment type="function">
    <text evidence="2 3 6">An alpha subtype methylase, recognizes the double-stranded sequence 5'-GATC-3' and methylates A-2 (Probable) (PubMed:12654995). May be involved in methyl-directed DNA mismatch repair, initiation of chromosome replication and gene expression (By similarity).</text>
</comment>
<comment type="catalytic activity">
    <reaction>
        <text>a 2'-deoxyadenosine in DNA + S-adenosyl-L-methionine = an N(6)-methyl-2'-deoxyadenosine in DNA + S-adenosyl-L-homocysteine + H(+)</text>
        <dbReference type="Rhea" id="RHEA:15197"/>
        <dbReference type="Rhea" id="RHEA-COMP:12418"/>
        <dbReference type="Rhea" id="RHEA-COMP:12419"/>
        <dbReference type="ChEBI" id="CHEBI:15378"/>
        <dbReference type="ChEBI" id="CHEBI:57856"/>
        <dbReference type="ChEBI" id="CHEBI:59789"/>
        <dbReference type="ChEBI" id="CHEBI:90615"/>
        <dbReference type="ChEBI" id="CHEBI:90616"/>
        <dbReference type="EC" id="2.1.1.72"/>
    </reaction>
</comment>
<comment type="similarity">
    <text evidence="5">Belongs to the N(4)/N(6)-methyltransferase family.</text>
</comment>
<comment type="sequence caution" evidence="5">
    <conflict type="frameshift">
        <sequence resource="EMBL-CDS" id="CAA48031"/>
    </conflict>
</comment>
<protein>
    <recommendedName>
        <fullName>DNA adenine methylase</fullName>
        <ecNumber>2.1.1.72</ecNumber>
    </recommendedName>
    <alternativeName>
        <fullName>DNA adenine methyltransferase</fullName>
    </alternativeName>
    <alternativeName>
        <fullName>Deoxyadenosyl-methyltransferase</fullName>
    </alternativeName>
    <alternativeName>
        <fullName>M.VchADam</fullName>
    </alternativeName>
    <alternativeName>
        <fullName evidence="3">Orphan methyltransferase M.VchADamP</fullName>
        <shortName evidence="3">M.VchADamP</shortName>
    </alternativeName>
</protein>
<reference key="1">
    <citation type="journal article" date="1994" name="Gene">
        <title>The DNA adenine methyltransferase-encoding gene (dam) of Vibrio cholerae.</title>
        <authorList>
            <person name="Bandyopadhyay R."/>
            <person name="Das J."/>
        </authorList>
    </citation>
    <scope>NUCLEOTIDE SEQUENCE [GENOMIC DNA]</scope>
    <scope>FUNCTION</scope>
    <source>
        <strain>ATCC 25870 / Classical Inaba 569B / Serotype O1</strain>
    </source>
</reference>
<reference key="2">
    <citation type="journal article" date="2000" name="Nature">
        <title>DNA sequence of both chromosomes of the cholera pathogen Vibrio cholerae.</title>
        <authorList>
            <person name="Heidelberg J.F."/>
            <person name="Eisen J.A."/>
            <person name="Nelson W.C."/>
            <person name="Clayton R.A."/>
            <person name="Gwinn M.L."/>
            <person name="Dodson R.J."/>
            <person name="Haft D.H."/>
            <person name="Hickey E.K."/>
            <person name="Peterson J.D."/>
            <person name="Umayam L.A."/>
            <person name="Gill S.R."/>
            <person name="Nelson K.E."/>
            <person name="Read T.D."/>
            <person name="Tettelin H."/>
            <person name="Richardson D.L."/>
            <person name="Ermolaeva M.D."/>
            <person name="Vamathevan J.J."/>
            <person name="Bass S."/>
            <person name="Qin H."/>
            <person name="Dragoi I."/>
            <person name="Sellers P."/>
            <person name="McDonald L.A."/>
            <person name="Utterback T.R."/>
            <person name="Fleischmann R.D."/>
            <person name="Nierman W.C."/>
            <person name="White O."/>
            <person name="Salzberg S.L."/>
            <person name="Smith H.O."/>
            <person name="Colwell R.R."/>
            <person name="Mekalanos J.J."/>
            <person name="Venter J.C."/>
            <person name="Fraser C.M."/>
        </authorList>
    </citation>
    <scope>NUCLEOTIDE SEQUENCE [LARGE SCALE GENOMIC DNA]</scope>
    <source>
        <strain>ATCC 39315 / El Tor Inaba N16961</strain>
    </source>
</reference>
<reference key="3">
    <citation type="journal article" date="2003" name="Nucleic Acids Res.">
        <title>A nomenclature for restriction enzymes, DNA methyltransferases, homing endonucleases and their genes.</title>
        <authorList>
            <person name="Roberts R.J."/>
            <person name="Belfort M."/>
            <person name="Bestor T."/>
            <person name="Bhagwat A.S."/>
            <person name="Bickle T.A."/>
            <person name="Bitinaite J."/>
            <person name="Blumenthal R.M."/>
            <person name="Degtyarev S.K."/>
            <person name="Dryden D.T."/>
            <person name="Dybvig K."/>
            <person name="Firman K."/>
            <person name="Gromova E.S."/>
            <person name="Gumport R.I."/>
            <person name="Halford S.E."/>
            <person name="Hattman S."/>
            <person name="Heitman J."/>
            <person name="Hornby D.P."/>
            <person name="Janulaitis A."/>
            <person name="Jeltsch A."/>
            <person name="Josephsen J."/>
            <person name="Kiss A."/>
            <person name="Klaenhammer T.R."/>
            <person name="Kobayashi I."/>
            <person name="Kong H."/>
            <person name="Krueger D.H."/>
            <person name="Lacks S."/>
            <person name="Marinus M.G."/>
            <person name="Miyahara M."/>
            <person name="Morgan R.D."/>
            <person name="Murray N.E."/>
            <person name="Nagaraja V."/>
            <person name="Piekarowicz A."/>
            <person name="Pingoud A."/>
            <person name="Raleigh E."/>
            <person name="Rao D.N."/>
            <person name="Reich N."/>
            <person name="Repin V.E."/>
            <person name="Selker E.U."/>
            <person name="Shaw P.C."/>
            <person name="Stein D.C."/>
            <person name="Stoddard B.L."/>
            <person name="Szybalski W."/>
            <person name="Trautner T.A."/>
            <person name="Van Etten J.L."/>
            <person name="Vitor J.M."/>
            <person name="Wilson G.G."/>
            <person name="Xu S.Y."/>
        </authorList>
    </citation>
    <scope>NOMENCLATURE</scope>
    <scope>SUBTYPE</scope>
</reference>
<gene>
    <name evidence="4" type="primary">dam</name>
    <name type="ordered locus">VC_2626</name>
</gene>
<organism>
    <name type="scientific">Vibrio cholerae serotype O1 (strain ATCC 39315 / El Tor Inaba N16961)</name>
    <dbReference type="NCBI Taxonomy" id="243277"/>
    <lineage>
        <taxon>Bacteria</taxon>
        <taxon>Pseudomonadati</taxon>
        <taxon>Pseudomonadota</taxon>
        <taxon>Gammaproteobacteria</taxon>
        <taxon>Vibrionales</taxon>
        <taxon>Vibrionaceae</taxon>
        <taxon>Vibrio</taxon>
    </lineage>
</organism>
<feature type="chain" id="PRO_0000087999" description="DNA adenine methylase">
    <location>
        <begin position="1"/>
        <end position="277"/>
    </location>
</feature>
<feature type="binding site" evidence="1">
    <location>
        <position position="10"/>
    </location>
    <ligand>
        <name>S-adenosyl-L-methionine</name>
        <dbReference type="ChEBI" id="CHEBI:59789"/>
    </ligand>
</feature>
<feature type="binding site" evidence="1">
    <location>
        <position position="14"/>
    </location>
    <ligand>
        <name>S-adenosyl-L-methionine</name>
        <dbReference type="ChEBI" id="CHEBI:59789"/>
    </ligand>
</feature>
<feature type="binding site" evidence="1">
    <location>
        <position position="54"/>
    </location>
    <ligand>
        <name>S-adenosyl-L-methionine</name>
        <dbReference type="ChEBI" id="CHEBI:59789"/>
    </ligand>
</feature>
<feature type="binding site" evidence="1">
    <location>
        <position position="181"/>
    </location>
    <ligand>
        <name>S-adenosyl-L-methionine</name>
        <dbReference type="ChEBI" id="CHEBI:59789"/>
    </ligand>
</feature>
<name>DMA_VIBCH</name>
<accession>P0C6Q8</accession>
<accession>Q08318</accession>
<accession>Q9KNV4</accession>
<evidence type="ECO:0000250" key="1"/>
<evidence type="ECO:0000250" key="2">
    <source>
        <dbReference type="UniProtKB" id="P0AEE8"/>
    </source>
</evidence>
<evidence type="ECO:0000303" key="3">
    <source>
    </source>
</evidence>
<evidence type="ECO:0000303" key="4">
    <source>
    </source>
</evidence>
<evidence type="ECO:0000305" key="5"/>
<evidence type="ECO:0000305" key="6">
    <source>
    </source>
</evidence>
<keyword id="KW-0235">DNA replication</keyword>
<keyword id="KW-0238">DNA-binding</keyword>
<keyword id="KW-0489">Methyltransferase</keyword>
<keyword id="KW-1185">Reference proteome</keyword>
<keyword id="KW-0949">S-adenosyl-L-methionine</keyword>
<keyword id="KW-0808">Transferase</keyword>